<gene>
    <name evidence="1" type="primary">ctaA</name>
    <name type="ordered locus">SH1837</name>
</gene>
<reference key="1">
    <citation type="journal article" date="2005" name="J. Bacteriol.">
        <title>Whole-genome sequencing of Staphylococcus haemolyticus uncovers the extreme plasticity of its genome and the evolution of human-colonizing staphylococcal species.</title>
        <authorList>
            <person name="Takeuchi F."/>
            <person name="Watanabe S."/>
            <person name="Baba T."/>
            <person name="Yuzawa H."/>
            <person name="Ito T."/>
            <person name="Morimoto Y."/>
            <person name="Kuroda M."/>
            <person name="Cui L."/>
            <person name="Takahashi M."/>
            <person name="Ankai A."/>
            <person name="Baba S."/>
            <person name="Fukui S."/>
            <person name="Lee J.C."/>
            <person name="Hiramatsu K."/>
        </authorList>
    </citation>
    <scope>NUCLEOTIDE SEQUENCE [LARGE SCALE GENOMIC DNA]</scope>
    <source>
        <strain>JCSC1435</strain>
    </source>
</reference>
<comment type="function">
    <text evidence="1">Catalyzes the conversion of heme O to heme A by two successive hydroxylations of the methyl group at C8. The first hydroxylation forms heme I, the second hydroxylation results in an unstable dihydroxymethyl group, which spontaneously dehydrates, resulting in the formyl group of heme A.</text>
</comment>
<comment type="catalytic activity">
    <reaction evidence="1">
        <text>Fe(II)-heme o + 2 A + H2O = Fe(II)-heme a + 2 AH2</text>
        <dbReference type="Rhea" id="RHEA:63388"/>
        <dbReference type="ChEBI" id="CHEBI:13193"/>
        <dbReference type="ChEBI" id="CHEBI:15377"/>
        <dbReference type="ChEBI" id="CHEBI:17499"/>
        <dbReference type="ChEBI" id="CHEBI:60530"/>
        <dbReference type="ChEBI" id="CHEBI:61715"/>
        <dbReference type="EC" id="1.17.99.9"/>
    </reaction>
    <physiologicalReaction direction="left-to-right" evidence="1">
        <dbReference type="Rhea" id="RHEA:63389"/>
    </physiologicalReaction>
</comment>
<comment type="cofactor">
    <cofactor evidence="1">
        <name>heme b</name>
        <dbReference type="ChEBI" id="CHEBI:60344"/>
    </cofactor>
</comment>
<comment type="pathway">
    <text evidence="1">Porphyrin-containing compound metabolism; heme A biosynthesis; heme A from heme O: step 1/1.</text>
</comment>
<comment type="subunit">
    <text evidence="1">Interacts with CtaB.</text>
</comment>
<comment type="subcellular location">
    <subcellularLocation>
        <location evidence="1">Cell membrane</location>
        <topology evidence="1">Multi-pass membrane protein</topology>
    </subcellularLocation>
</comment>
<comment type="domain">
    <text evidence="1">The N-half (TM1-TM4) and C-half (TM5-TM8) domains are connected by an intracellular loop. Each domain is formed from four-helix bundles and they align in a pseudo twofold symmetry manner. The N-half domain is the substrate-heme O binding domain and the C-half domain is the cofactor heme B binding domain.</text>
</comment>
<comment type="domain">
    <text evidence="1">The cysteines of disulfide bond Cys-37 and Cys-44 may be involved in transfer of reducing equivalents from quinol in the membrane to the active site of the enzyme.</text>
</comment>
<comment type="similarity">
    <text evidence="1">Belongs to the COX15/CtaA family. Type 1 subfamily.</text>
</comment>
<dbReference type="EC" id="1.17.99.9" evidence="1"/>
<dbReference type="EMBL" id="AP006716">
    <property type="protein sequence ID" value="BAE05146.1"/>
    <property type="molecule type" value="Genomic_DNA"/>
</dbReference>
<dbReference type="RefSeq" id="WP_011276113.1">
    <property type="nucleotide sequence ID" value="NC_007168.1"/>
</dbReference>
<dbReference type="SMR" id="Q4L5C9"/>
<dbReference type="KEGG" id="sha:SH1837"/>
<dbReference type="eggNOG" id="COG1612">
    <property type="taxonomic scope" value="Bacteria"/>
</dbReference>
<dbReference type="HOGENOM" id="CLU_041525_3_1_9"/>
<dbReference type="OrthoDB" id="9816428at2"/>
<dbReference type="UniPathway" id="UPA00269">
    <property type="reaction ID" value="UER00713"/>
</dbReference>
<dbReference type="Proteomes" id="UP000000543">
    <property type="component" value="Chromosome"/>
</dbReference>
<dbReference type="GO" id="GO:0005886">
    <property type="term" value="C:plasma membrane"/>
    <property type="evidence" value="ECO:0007669"/>
    <property type="project" value="UniProtKB-SubCell"/>
</dbReference>
<dbReference type="GO" id="GO:0046872">
    <property type="term" value="F:metal ion binding"/>
    <property type="evidence" value="ECO:0007669"/>
    <property type="project" value="UniProtKB-KW"/>
</dbReference>
<dbReference type="GO" id="GO:0016653">
    <property type="term" value="F:oxidoreductase activity, acting on NAD(P)H, heme protein as acceptor"/>
    <property type="evidence" value="ECO:0007669"/>
    <property type="project" value="InterPro"/>
</dbReference>
<dbReference type="GO" id="GO:0006784">
    <property type="term" value="P:heme A biosynthetic process"/>
    <property type="evidence" value="ECO:0007669"/>
    <property type="project" value="UniProtKB-UniRule"/>
</dbReference>
<dbReference type="HAMAP" id="MF_01664">
    <property type="entry name" value="HemeA_synth_type1"/>
    <property type="match status" value="1"/>
</dbReference>
<dbReference type="InterPro" id="IPR003780">
    <property type="entry name" value="COX15/CtaA_fam"/>
</dbReference>
<dbReference type="InterPro" id="IPR050450">
    <property type="entry name" value="COX15/CtaA_HemeA_synthase"/>
</dbReference>
<dbReference type="InterPro" id="IPR023755">
    <property type="entry name" value="HemeA_Synthase_type1"/>
</dbReference>
<dbReference type="PANTHER" id="PTHR35457">
    <property type="entry name" value="HEME A SYNTHASE"/>
    <property type="match status" value="1"/>
</dbReference>
<dbReference type="PANTHER" id="PTHR35457:SF1">
    <property type="entry name" value="HEME A SYNTHASE"/>
    <property type="match status" value="1"/>
</dbReference>
<dbReference type="Pfam" id="PF02628">
    <property type="entry name" value="COX15-CtaA"/>
    <property type="match status" value="1"/>
</dbReference>
<organism>
    <name type="scientific">Staphylococcus haemolyticus (strain JCSC1435)</name>
    <dbReference type="NCBI Taxonomy" id="279808"/>
    <lineage>
        <taxon>Bacteria</taxon>
        <taxon>Bacillati</taxon>
        <taxon>Bacillota</taxon>
        <taxon>Bacilli</taxon>
        <taxon>Bacillales</taxon>
        <taxon>Staphylococcaceae</taxon>
        <taxon>Staphylococcus</taxon>
    </lineage>
</organism>
<accession>Q4L5C9</accession>
<sequence length="304" mass="34390">MFNKRNLKWLSVLATIIMAFVQLGGALVTKTGSEDGCGSSWPLCHGALLPQNLPIDTIIELSHRAVSGLSLIVVLWLAITAWKHIGYIREVKPLAIISIAFLLVQALIGAAAVIWQQNSYVLALHFGISLISFSSVFVLMLIIFEVDKKYEADELYIRKPLRRLTWIMTGIVYLTIYTGALVRHAKASLAYGGWPLPFHDIIPHTEQDWVQFAHRGMAFITFFWIMITFIHAVKNYSENRTIRYGYTTAFILIILQVITGALSVMTNVNLFIALLHALFITILFGMIAYFIMLMLRTIRSEKIK</sequence>
<proteinExistence type="inferred from homology"/>
<feature type="chain" id="PRO_0000349003" description="Heme A synthase">
    <location>
        <begin position="1"/>
        <end position="304"/>
    </location>
</feature>
<feature type="topological domain" description="Cytoplasmic" evidence="1">
    <location>
        <begin position="1"/>
        <end position="8"/>
    </location>
</feature>
<feature type="transmembrane region" description="Helical" evidence="1">
    <location>
        <begin position="9"/>
        <end position="29"/>
    </location>
</feature>
<feature type="topological domain" description="Extracellular" evidence="1">
    <location>
        <begin position="30"/>
        <end position="67"/>
    </location>
</feature>
<feature type="transmembrane region" description="Helical" evidence="1">
    <location>
        <begin position="68"/>
        <end position="88"/>
    </location>
</feature>
<feature type="topological domain" description="Cytoplasmic" evidence="1">
    <location>
        <begin position="89"/>
        <end position="93"/>
    </location>
</feature>
<feature type="transmembrane region" description="Helical" evidence="1">
    <location>
        <begin position="94"/>
        <end position="114"/>
    </location>
</feature>
<feature type="topological domain" description="Extracellular" evidence="1">
    <location>
        <begin position="115"/>
        <end position="123"/>
    </location>
</feature>
<feature type="transmembrane region" description="Helical" evidence="1">
    <location>
        <begin position="124"/>
        <end position="144"/>
    </location>
</feature>
<feature type="topological domain" description="Cytoplasmic" evidence="1">
    <location>
        <begin position="145"/>
        <end position="163"/>
    </location>
</feature>
<feature type="transmembrane region" description="Helical" evidence="1">
    <location>
        <begin position="164"/>
        <end position="184"/>
    </location>
</feature>
<feature type="topological domain" description="Extracellular" evidence="1">
    <location>
        <begin position="185"/>
        <end position="215"/>
    </location>
</feature>
<feature type="transmembrane region" description="Helical" evidence="1">
    <location>
        <begin position="216"/>
        <end position="236"/>
    </location>
</feature>
<feature type="topological domain" description="Cytoplasmic" evidence="1">
    <location>
        <begin position="237"/>
        <end position="244"/>
    </location>
</feature>
<feature type="transmembrane region" description="Helical" evidence="1">
    <location>
        <begin position="245"/>
        <end position="265"/>
    </location>
</feature>
<feature type="topological domain" description="Extracellular" evidence="1">
    <location>
        <begin position="266"/>
        <end position="270"/>
    </location>
</feature>
<feature type="transmembrane region" description="Helical" evidence="1">
    <location>
        <begin position="271"/>
        <end position="291"/>
    </location>
</feature>
<feature type="topological domain" description="Cytoplasmic" evidence="1">
    <location>
        <begin position="292"/>
        <end position="304"/>
    </location>
</feature>
<feature type="active site" evidence="1">
    <location>
        <position position="60"/>
    </location>
</feature>
<feature type="binding site" description="axial binding residue" evidence="1">
    <location>
        <position position="63"/>
    </location>
    <ligand>
        <name>heme o</name>
        <dbReference type="ChEBI" id="CHEBI:24480"/>
    </ligand>
    <ligandPart>
        <name>Fe</name>
        <dbReference type="ChEBI" id="CHEBI:18248"/>
    </ligandPart>
</feature>
<feature type="binding site" description="axial binding residue" evidence="1">
    <location>
        <position position="125"/>
    </location>
    <ligand>
        <name>heme o</name>
        <dbReference type="ChEBI" id="CHEBI:24480"/>
    </ligand>
    <ligandPart>
        <name>Fe</name>
        <dbReference type="ChEBI" id="CHEBI:18248"/>
    </ligandPart>
</feature>
<feature type="binding site" description="axial binding residue" evidence="1">
    <location>
        <position position="214"/>
    </location>
    <ligand>
        <name>heme b</name>
        <dbReference type="ChEBI" id="CHEBI:60344"/>
    </ligand>
    <ligandPart>
        <name>Fe</name>
        <dbReference type="ChEBI" id="CHEBI:18248"/>
    </ligandPart>
</feature>
<feature type="binding site" description="axial binding residue" evidence="1">
    <location>
        <position position="276"/>
    </location>
    <ligand>
        <name>heme b</name>
        <dbReference type="ChEBI" id="CHEBI:60344"/>
    </ligand>
    <ligandPart>
        <name>Fe</name>
        <dbReference type="ChEBI" id="CHEBI:18248"/>
    </ligandPart>
</feature>
<feature type="disulfide bond" description="Essential for catalytic activity" evidence="1">
    <location>
        <begin position="37"/>
        <end position="44"/>
    </location>
</feature>
<evidence type="ECO:0000255" key="1">
    <source>
        <dbReference type="HAMAP-Rule" id="MF_01664"/>
    </source>
</evidence>
<protein>
    <recommendedName>
        <fullName evidence="1">Heme A synthase</fullName>
        <shortName evidence="1">HAS</shortName>
        <ecNumber evidence="1">1.17.99.9</ecNumber>
    </recommendedName>
    <alternativeName>
        <fullName evidence="1">Cytochrome aa3-controlling protein</fullName>
    </alternativeName>
</protein>
<keyword id="KW-1003">Cell membrane</keyword>
<keyword id="KW-1015">Disulfide bond</keyword>
<keyword id="KW-0350">Heme biosynthesis</keyword>
<keyword id="KW-0408">Iron</keyword>
<keyword id="KW-0472">Membrane</keyword>
<keyword id="KW-0479">Metal-binding</keyword>
<keyword id="KW-0560">Oxidoreductase</keyword>
<keyword id="KW-0812">Transmembrane</keyword>
<keyword id="KW-1133">Transmembrane helix</keyword>
<name>CTAA_STAHJ</name>